<proteinExistence type="inferred from homology"/>
<accession>P42351</accession>
<gene>
    <name type="primary">cytM</name>
    <name type="ordered locus">sll1245</name>
</gene>
<reference key="1">
    <citation type="journal article" date="1994" name="J. Plant Physiol.">
        <title>A new type of cytochrome c from Synechocystis PCC6803.</title>
        <authorList>
            <person name="Malakhov M.P."/>
            <person name="Wada H."/>
            <person name="Los D.A."/>
            <person name="Semenenko V.E."/>
            <person name="Murata N."/>
        </authorList>
    </citation>
    <scope>NUCLEOTIDE SEQUENCE [GENOMIC DNA]</scope>
</reference>
<reference key="2">
    <citation type="journal article" date="1996" name="DNA Res.">
        <title>Sequence analysis of the genome of the unicellular cyanobacterium Synechocystis sp. strain PCC6803. II. Sequence determination of the entire genome and assignment of potential protein-coding regions.</title>
        <authorList>
            <person name="Kaneko T."/>
            <person name="Sato S."/>
            <person name="Kotani H."/>
            <person name="Tanaka A."/>
            <person name="Asamizu E."/>
            <person name="Nakamura Y."/>
            <person name="Miyajima N."/>
            <person name="Hirosawa M."/>
            <person name="Sugiura M."/>
            <person name="Sasamoto S."/>
            <person name="Kimura T."/>
            <person name="Hosouchi T."/>
            <person name="Matsuno A."/>
            <person name="Muraki A."/>
            <person name="Nakazaki N."/>
            <person name="Naruo K."/>
            <person name="Okumura S."/>
            <person name="Shimpo S."/>
            <person name="Takeuchi C."/>
            <person name="Wada T."/>
            <person name="Watanabe A."/>
            <person name="Yamada M."/>
            <person name="Yasuda M."/>
            <person name="Tabata S."/>
        </authorList>
    </citation>
    <scope>NUCLEOTIDE SEQUENCE [LARGE SCALE GENOMIC DNA]</scope>
    <source>
        <strain>ATCC 27184 / PCC 6803 / Kazusa</strain>
    </source>
</reference>
<name>C55L_SYNY3</name>
<keyword id="KW-0249">Electron transport</keyword>
<keyword id="KW-0349">Heme</keyword>
<keyword id="KW-0408">Iron</keyword>
<keyword id="KW-0479">Metal-binding</keyword>
<keyword id="KW-0602">Photosynthesis</keyword>
<keyword id="KW-1185">Reference proteome</keyword>
<keyword id="KW-0732">Signal</keyword>
<keyword id="KW-0813">Transport</keyword>
<feature type="signal peptide" evidence="1">
    <location>
        <begin position="1"/>
        <end position="29"/>
    </location>
</feature>
<feature type="chain" id="PRO_0000006540" description="Cytochrome c-553-like">
    <location>
        <begin position="30"/>
        <end position="105"/>
    </location>
</feature>
<feature type="binding site" description="covalent" evidence="2">
    <location>
        <position position="45"/>
    </location>
    <ligand>
        <name>heme c</name>
        <dbReference type="ChEBI" id="CHEBI:61717"/>
    </ligand>
</feature>
<feature type="binding site" description="covalent" evidence="2">
    <location>
        <position position="48"/>
    </location>
    <ligand>
        <name>heme c</name>
        <dbReference type="ChEBI" id="CHEBI:61717"/>
    </ligand>
</feature>
<feature type="binding site" description="axial binding residue" evidence="2">
    <location>
        <position position="49"/>
    </location>
    <ligand>
        <name>heme c</name>
        <dbReference type="ChEBI" id="CHEBI:61717"/>
    </ligand>
    <ligandPart>
        <name>Fe</name>
        <dbReference type="ChEBI" id="CHEBI:18248"/>
    </ligandPart>
</feature>
<feature type="binding site" description="axial binding residue" evidence="2">
    <location>
        <position position="85"/>
    </location>
    <ligand>
        <name>heme c</name>
        <dbReference type="ChEBI" id="CHEBI:61717"/>
    </ligand>
    <ligandPart>
        <name>Fe</name>
        <dbReference type="ChEBI" id="CHEBI:18248"/>
    </ligandPart>
</feature>
<sequence length="105" mass="11458">MAGIVSLVILAVALFSFMNFDPYVSQVLALKGDADRGRAIFQANCAVCHGIQADGYIGPSLWGVSQRRSQSHIIHQVVSGQTPPMPQFEPNPQEMADLLNYLKTL</sequence>
<organism>
    <name type="scientific">Synechocystis sp. (strain ATCC 27184 / PCC 6803 / Kazusa)</name>
    <dbReference type="NCBI Taxonomy" id="1111708"/>
    <lineage>
        <taxon>Bacteria</taxon>
        <taxon>Bacillati</taxon>
        <taxon>Cyanobacteriota</taxon>
        <taxon>Cyanophyceae</taxon>
        <taxon>Synechococcales</taxon>
        <taxon>Merismopediaceae</taxon>
        <taxon>Synechocystis</taxon>
    </lineage>
</organism>
<protein>
    <recommendedName>
        <fullName>Cytochrome c-553-like</fullName>
    </recommendedName>
</protein>
<comment type="PTM">
    <text>Binds 1 heme c group covalently per subunit.</text>
</comment>
<comment type="sequence caution" evidence="3">
    <conflict type="erroneous initiation">
        <sequence resource="EMBL-CDS" id="BAA18172"/>
    </conflict>
</comment>
<evidence type="ECO:0000255" key="1"/>
<evidence type="ECO:0000255" key="2">
    <source>
        <dbReference type="PROSITE-ProRule" id="PRU00433"/>
    </source>
</evidence>
<evidence type="ECO:0000305" key="3"/>
<dbReference type="EMBL" id="D10716">
    <property type="protein sequence ID" value="BAA01559.1"/>
    <property type="molecule type" value="Genomic_DNA"/>
</dbReference>
<dbReference type="EMBL" id="BA000022">
    <property type="protein sequence ID" value="BAA18172.1"/>
    <property type="status" value="ALT_INIT"/>
    <property type="molecule type" value="Genomic_DNA"/>
</dbReference>
<dbReference type="PIR" id="S75611">
    <property type="entry name" value="S27723"/>
</dbReference>
<dbReference type="SMR" id="P42351"/>
<dbReference type="STRING" id="1148.gene:10499045"/>
<dbReference type="PaxDb" id="1148-1653257"/>
<dbReference type="EnsemblBacteria" id="BAA18172">
    <property type="protein sequence ID" value="BAA18172"/>
    <property type="gene ID" value="BAA18172"/>
</dbReference>
<dbReference type="KEGG" id="syn:sll1245"/>
<dbReference type="eggNOG" id="COG2010">
    <property type="taxonomic scope" value="Bacteria"/>
</dbReference>
<dbReference type="InParanoid" id="P42351"/>
<dbReference type="PhylomeDB" id="P42351"/>
<dbReference type="Proteomes" id="UP000001425">
    <property type="component" value="Chromosome"/>
</dbReference>
<dbReference type="GO" id="GO:0009055">
    <property type="term" value="F:electron transfer activity"/>
    <property type="evidence" value="ECO:0007669"/>
    <property type="project" value="InterPro"/>
</dbReference>
<dbReference type="GO" id="GO:0020037">
    <property type="term" value="F:heme binding"/>
    <property type="evidence" value="ECO:0007669"/>
    <property type="project" value="InterPro"/>
</dbReference>
<dbReference type="GO" id="GO:0046872">
    <property type="term" value="F:metal ion binding"/>
    <property type="evidence" value="ECO:0007669"/>
    <property type="project" value="UniProtKB-KW"/>
</dbReference>
<dbReference type="GO" id="GO:0015979">
    <property type="term" value="P:photosynthesis"/>
    <property type="evidence" value="ECO:0007669"/>
    <property type="project" value="UniProtKB-KW"/>
</dbReference>
<dbReference type="Gene3D" id="1.10.760.10">
    <property type="entry name" value="Cytochrome c-like domain"/>
    <property type="match status" value="1"/>
</dbReference>
<dbReference type="InterPro" id="IPR009056">
    <property type="entry name" value="Cyt_c-like_dom"/>
</dbReference>
<dbReference type="InterPro" id="IPR036909">
    <property type="entry name" value="Cyt_c-like_dom_sf"/>
</dbReference>
<dbReference type="InterPro" id="IPR051811">
    <property type="entry name" value="Cytochrome_c550/c551-like"/>
</dbReference>
<dbReference type="PANTHER" id="PTHR37823">
    <property type="entry name" value="CYTOCHROME C-553-LIKE"/>
    <property type="match status" value="1"/>
</dbReference>
<dbReference type="PANTHER" id="PTHR37823:SF1">
    <property type="entry name" value="CYTOCHROME C-553-LIKE"/>
    <property type="match status" value="1"/>
</dbReference>
<dbReference type="Pfam" id="PF00034">
    <property type="entry name" value="Cytochrom_C"/>
    <property type="match status" value="1"/>
</dbReference>
<dbReference type="SUPFAM" id="SSF46626">
    <property type="entry name" value="Cytochrome c"/>
    <property type="match status" value="1"/>
</dbReference>
<dbReference type="PROSITE" id="PS51007">
    <property type="entry name" value="CYTC"/>
    <property type="match status" value="1"/>
</dbReference>